<keyword id="KW-0963">Cytoplasm</keyword>
<keyword id="KW-0342">GTP-binding</keyword>
<keyword id="KW-0396">Initiation factor</keyword>
<keyword id="KW-0547">Nucleotide-binding</keyword>
<keyword id="KW-0648">Protein biosynthesis</keyword>
<sequence length="1045" mass="110522">MSDENDNGRPGSNPGGRAPITLKPRQGSVSAGVVKQSFSHGRTKTVVVETKRVRPHAPPAGNLAAPSSAERRQGDAPRQQSSSGGGGSSAGGLSQGEMLARQRAIEAAREHQERQAAERRAAEARAASEAAAARDAAAKSAAAAKAAAAPAPEAPAAPAPTPAPVAQAPAAPVVQAPVVAAPVQAPAAPVAAAPAAPRAEAPRPAPPPVRSDAPRPAPTAGQTRTYEPSRDRRDDRSSTTTYRPGPGAPPQGDRPQGDRPQGDRPFNQRAPRPDGPYNQRTPRPDAGGPPRGPRPEGAGGFRNDRPQGDRPQGDRPQGDRPQGDRPTQTVRYSALAPRPAPGARPGPGGPRGARPGVPASAPATPEIQRATRSAPRPGGDVGRKPEEDDDRRKAAAPGKAVSRAKGAPIRREGRLTIQTVAGDGDSADRMRSLASVRRAREREKEKRRGGPADVVKVAREVIIPDVITVQELSNRMAVRGVEIIKFLMRQGVMLKINDVIDNDTAELVATEFGHTVRRVSEADVEEGFIGAEDVDDHLEPRPPVVTVMGHVDHGKTSLLDALRKADVASGEHGGITQHIGAYQVRLESGQKVTFLDTPGHAAFSQMRARGANITDLVILVVAGDDGVMPQTVEAIKHARAAEVPIIVAVNKMDKPGADSTRVVNELLQHEIVVESLGGDTQIVEVSAKTGQGLDELIERILLLAEVMDLKANPDRTADGVVIEAKLDKGRGAVSTVLVKRGTLKRGDIVVAGSQFGRVRALLNERNEQLTEAGPATPVEILGLDGVPSPGDPFAVVENEARARELTEYRIRLKREKSMHPVGAGATSMADMMAKLQDKKYRELPLVIKADVQGSAEAIIGSLDAMSTDEVRARIILSGAGAISESDVMLAKGAGAPLIGFNVRASAQARALAEREGVEIRYYAIIYDLLDDIKGVLSGMLAPIQRETFLGNAEVLQAFDISKVGKVAGCRVTEGVVRKGAKVRIIRNDIVVLELGTLQTLKRFKDEVPEVPSGQECGMMFAGFQDIKVGDTIECFTVEEIKRQLD</sequence>
<protein>
    <recommendedName>
        <fullName evidence="2">Translation initiation factor IF-2</fullName>
    </recommendedName>
</protein>
<evidence type="ECO:0000250" key="1"/>
<evidence type="ECO:0000255" key="2">
    <source>
        <dbReference type="HAMAP-Rule" id="MF_00100"/>
    </source>
</evidence>
<evidence type="ECO:0000256" key="3">
    <source>
        <dbReference type="SAM" id="MobiDB-lite"/>
    </source>
</evidence>
<proteinExistence type="inferred from homology"/>
<feature type="chain" id="PRO_1000075596" description="Translation initiation factor IF-2">
    <location>
        <begin position="1"/>
        <end position="1045"/>
    </location>
</feature>
<feature type="domain" description="tr-type G">
    <location>
        <begin position="540"/>
        <end position="710"/>
    </location>
</feature>
<feature type="region of interest" description="Disordered" evidence="3">
    <location>
        <begin position="1"/>
        <end position="169"/>
    </location>
</feature>
<feature type="region of interest" description="Disordered" evidence="3">
    <location>
        <begin position="184"/>
        <end position="451"/>
    </location>
</feature>
<feature type="region of interest" description="G1" evidence="1">
    <location>
        <begin position="549"/>
        <end position="556"/>
    </location>
</feature>
<feature type="region of interest" description="G2" evidence="1">
    <location>
        <begin position="574"/>
        <end position="578"/>
    </location>
</feature>
<feature type="region of interest" description="G3" evidence="1">
    <location>
        <begin position="596"/>
        <end position="599"/>
    </location>
</feature>
<feature type="region of interest" description="G4" evidence="1">
    <location>
        <begin position="650"/>
        <end position="653"/>
    </location>
</feature>
<feature type="region of interest" description="G5" evidence="1">
    <location>
        <begin position="686"/>
        <end position="688"/>
    </location>
</feature>
<feature type="compositionally biased region" description="Gly residues" evidence="3">
    <location>
        <begin position="83"/>
        <end position="94"/>
    </location>
</feature>
<feature type="compositionally biased region" description="Basic and acidic residues" evidence="3">
    <location>
        <begin position="103"/>
        <end position="123"/>
    </location>
</feature>
<feature type="compositionally biased region" description="Low complexity" evidence="3">
    <location>
        <begin position="124"/>
        <end position="151"/>
    </location>
</feature>
<feature type="compositionally biased region" description="Pro residues" evidence="3">
    <location>
        <begin position="152"/>
        <end position="163"/>
    </location>
</feature>
<feature type="compositionally biased region" description="Low complexity" evidence="3">
    <location>
        <begin position="184"/>
        <end position="199"/>
    </location>
</feature>
<feature type="compositionally biased region" description="Basic and acidic residues" evidence="3">
    <location>
        <begin position="227"/>
        <end position="237"/>
    </location>
</feature>
<feature type="compositionally biased region" description="Basic and acidic residues" evidence="3">
    <location>
        <begin position="302"/>
        <end position="323"/>
    </location>
</feature>
<feature type="compositionally biased region" description="Pro residues" evidence="3">
    <location>
        <begin position="338"/>
        <end position="348"/>
    </location>
</feature>
<feature type="compositionally biased region" description="Low complexity" evidence="3">
    <location>
        <begin position="352"/>
        <end position="363"/>
    </location>
</feature>
<feature type="compositionally biased region" description="Basic and acidic residues" evidence="3">
    <location>
        <begin position="381"/>
        <end position="393"/>
    </location>
</feature>
<feature type="compositionally biased region" description="Basic and acidic residues" evidence="3">
    <location>
        <begin position="438"/>
        <end position="450"/>
    </location>
</feature>
<feature type="binding site" evidence="2">
    <location>
        <begin position="549"/>
        <end position="556"/>
    </location>
    <ligand>
        <name>GTP</name>
        <dbReference type="ChEBI" id="CHEBI:37565"/>
    </ligand>
</feature>
<feature type="binding site" evidence="2">
    <location>
        <begin position="596"/>
        <end position="600"/>
    </location>
    <ligand>
        <name>GTP</name>
        <dbReference type="ChEBI" id="CHEBI:37565"/>
    </ligand>
</feature>
<feature type="binding site" evidence="2">
    <location>
        <begin position="650"/>
        <end position="653"/>
    </location>
    <ligand>
        <name>GTP</name>
        <dbReference type="ChEBI" id="CHEBI:37565"/>
    </ligand>
</feature>
<gene>
    <name evidence="2" type="primary">infB</name>
    <name type="ordered locus">Caul_0033</name>
</gene>
<accession>B0T167</accession>
<dbReference type="EMBL" id="CP000927">
    <property type="protein sequence ID" value="ABZ69171.1"/>
    <property type="molecule type" value="Genomic_DNA"/>
</dbReference>
<dbReference type="SMR" id="B0T167"/>
<dbReference type="STRING" id="366602.Caul_0033"/>
<dbReference type="KEGG" id="cak:Caul_0033"/>
<dbReference type="eggNOG" id="COG0532">
    <property type="taxonomic scope" value="Bacteria"/>
</dbReference>
<dbReference type="HOGENOM" id="CLU_006301_9_3_5"/>
<dbReference type="OrthoDB" id="9811804at2"/>
<dbReference type="GO" id="GO:0005737">
    <property type="term" value="C:cytoplasm"/>
    <property type="evidence" value="ECO:0007669"/>
    <property type="project" value="UniProtKB-SubCell"/>
</dbReference>
<dbReference type="GO" id="GO:0005525">
    <property type="term" value="F:GTP binding"/>
    <property type="evidence" value="ECO:0007669"/>
    <property type="project" value="UniProtKB-KW"/>
</dbReference>
<dbReference type="GO" id="GO:0003924">
    <property type="term" value="F:GTPase activity"/>
    <property type="evidence" value="ECO:0007669"/>
    <property type="project" value="UniProtKB-UniRule"/>
</dbReference>
<dbReference type="GO" id="GO:0097216">
    <property type="term" value="F:guanosine tetraphosphate binding"/>
    <property type="evidence" value="ECO:0007669"/>
    <property type="project" value="UniProtKB-ARBA"/>
</dbReference>
<dbReference type="GO" id="GO:0003743">
    <property type="term" value="F:translation initiation factor activity"/>
    <property type="evidence" value="ECO:0007669"/>
    <property type="project" value="UniProtKB-UniRule"/>
</dbReference>
<dbReference type="CDD" id="cd01887">
    <property type="entry name" value="IF2_eIF5B"/>
    <property type="match status" value="1"/>
</dbReference>
<dbReference type="CDD" id="cd03702">
    <property type="entry name" value="IF2_mtIF2_II"/>
    <property type="match status" value="1"/>
</dbReference>
<dbReference type="CDD" id="cd03692">
    <property type="entry name" value="mtIF2_IVc"/>
    <property type="match status" value="1"/>
</dbReference>
<dbReference type="FunFam" id="2.40.30.10:FF:000007">
    <property type="entry name" value="Translation initiation factor IF-2"/>
    <property type="match status" value="1"/>
</dbReference>
<dbReference type="FunFam" id="2.40.30.10:FF:000008">
    <property type="entry name" value="Translation initiation factor IF-2"/>
    <property type="match status" value="1"/>
</dbReference>
<dbReference type="FunFam" id="3.40.50.10050:FF:000001">
    <property type="entry name" value="Translation initiation factor IF-2"/>
    <property type="match status" value="1"/>
</dbReference>
<dbReference type="FunFam" id="3.40.50.300:FF:000019">
    <property type="entry name" value="Translation initiation factor IF-2"/>
    <property type="match status" value="1"/>
</dbReference>
<dbReference type="Gene3D" id="3.40.50.300">
    <property type="entry name" value="P-loop containing nucleotide triphosphate hydrolases"/>
    <property type="match status" value="1"/>
</dbReference>
<dbReference type="Gene3D" id="2.40.30.10">
    <property type="entry name" value="Translation factors"/>
    <property type="match status" value="2"/>
</dbReference>
<dbReference type="Gene3D" id="3.40.50.10050">
    <property type="entry name" value="Translation initiation factor IF- 2, domain 3"/>
    <property type="match status" value="1"/>
</dbReference>
<dbReference type="HAMAP" id="MF_00100_B">
    <property type="entry name" value="IF_2_B"/>
    <property type="match status" value="1"/>
</dbReference>
<dbReference type="InterPro" id="IPR053905">
    <property type="entry name" value="EF-G-like_DII"/>
</dbReference>
<dbReference type="InterPro" id="IPR004161">
    <property type="entry name" value="EFTu-like_2"/>
</dbReference>
<dbReference type="InterPro" id="IPR013575">
    <property type="entry name" value="IF2_assoc_dom_bac"/>
</dbReference>
<dbReference type="InterPro" id="IPR044145">
    <property type="entry name" value="IF2_II"/>
</dbReference>
<dbReference type="InterPro" id="IPR006847">
    <property type="entry name" value="IF2_N"/>
</dbReference>
<dbReference type="InterPro" id="IPR027417">
    <property type="entry name" value="P-loop_NTPase"/>
</dbReference>
<dbReference type="InterPro" id="IPR005225">
    <property type="entry name" value="Small_GTP-bd"/>
</dbReference>
<dbReference type="InterPro" id="IPR000795">
    <property type="entry name" value="T_Tr_GTP-bd_dom"/>
</dbReference>
<dbReference type="InterPro" id="IPR000178">
    <property type="entry name" value="TF_IF2_bacterial-like"/>
</dbReference>
<dbReference type="InterPro" id="IPR015760">
    <property type="entry name" value="TIF_IF2"/>
</dbReference>
<dbReference type="InterPro" id="IPR023115">
    <property type="entry name" value="TIF_IF2_dom3"/>
</dbReference>
<dbReference type="InterPro" id="IPR036925">
    <property type="entry name" value="TIF_IF2_dom3_sf"/>
</dbReference>
<dbReference type="InterPro" id="IPR009000">
    <property type="entry name" value="Transl_B-barrel_sf"/>
</dbReference>
<dbReference type="NCBIfam" id="TIGR00487">
    <property type="entry name" value="IF-2"/>
    <property type="match status" value="1"/>
</dbReference>
<dbReference type="NCBIfam" id="TIGR00231">
    <property type="entry name" value="small_GTP"/>
    <property type="match status" value="1"/>
</dbReference>
<dbReference type="PANTHER" id="PTHR43381:SF5">
    <property type="entry name" value="TR-TYPE G DOMAIN-CONTAINING PROTEIN"/>
    <property type="match status" value="1"/>
</dbReference>
<dbReference type="PANTHER" id="PTHR43381">
    <property type="entry name" value="TRANSLATION INITIATION FACTOR IF-2-RELATED"/>
    <property type="match status" value="1"/>
</dbReference>
<dbReference type="Pfam" id="PF22042">
    <property type="entry name" value="EF-G_D2"/>
    <property type="match status" value="1"/>
</dbReference>
<dbReference type="Pfam" id="PF00009">
    <property type="entry name" value="GTP_EFTU"/>
    <property type="match status" value="1"/>
</dbReference>
<dbReference type="Pfam" id="PF03144">
    <property type="entry name" value="GTP_EFTU_D2"/>
    <property type="match status" value="1"/>
</dbReference>
<dbReference type="Pfam" id="PF11987">
    <property type="entry name" value="IF-2"/>
    <property type="match status" value="1"/>
</dbReference>
<dbReference type="Pfam" id="PF08364">
    <property type="entry name" value="IF2_assoc"/>
    <property type="match status" value="1"/>
</dbReference>
<dbReference type="Pfam" id="PF04760">
    <property type="entry name" value="IF2_N"/>
    <property type="match status" value="1"/>
</dbReference>
<dbReference type="SUPFAM" id="SSF52156">
    <property type="entry name" value="Initiation factor IF2/eIF5b, domain 3"/>
    <property type="match status" value="1"/>
</dbReference>
<dbReference type="SUPFAM" id="SSF52540">
    <property type="entry name" value="P-loop containing nucleoside triphosphate hydrolases"/>
    <property type="match status" value="1"/>
</dbReference>
<dbReference type="SUPFAM" id="SSF50447">
    <property type="entry name" value="Translation proteins"/>
    <property type="match status" value="2"/>
</dbReference>
<dbReference type="PROSITE" id="PS51722">
    <property type="entry name" value="G_TR_2"/>
    <property type="match status" value="1"/>
</dbReference>
<dbReference type="PROSITE" id="PS01176">
    <property type="entry name" value="IF2"/>
    <property type="match status" value="1"/>
</dbReference>
<name>IF2_CAUSK</name>
<organism>
    <name type="scientific">Caulobacter sp. (strain K31)</name>
    <dbReference type="NCBI Taxonomy" id="366602"/>
    <lineage>
        <taxon>Bacteria</taxon>
        <taxon>Pseudomonadati</taxon>
        <taxon>Pseudomonadota</taxon>
        <taxon>Alphaproteobacteria</taxon>
        <taxon>Caulobacterales</taxon>
        <taxon>Caulobacteraceae</taxon>
        <taxon>Caulobacter</taxon>
    </lineage>
</organism>
<comment type="function">
    <text evidence="2">One of the essential components for the initiation of protein synthesis. Protects formylmethionyl-tRNA from spontaneous hydrolysis and promotes its binding to the 30S ribosomal subunits. Also involved in the hydrolysis of GTP during the formation of the 70S ribosomal complex.</text>
</comment>
<comment type="subcellular location">
    <subcellularLocation>
        <location evidence="2">Cytoplasm</location>
    </subcellularLocation>
</comment>
<comment type="similarity">
    <text evidence="2">Belongs to the TRAFAC class translation factor GTPase superfamily. Classic translation factor GTPase family. IF-2 subfamily.</text>
</comment>
<reference key="1">
    <citation type="submission" date="2008-01" db="EMBL/GenBank/DDBJ databases">
        <title>Complete sequence of chromosome of Caulobacter sp. K31.</title>
        <authorList>
            <consortium name="US DOE Joint Genome Institute"/>
            <person name="Copeland A."/>
            <person name="Lucas S."/>
            <person name="Lapidus A."/>
            <person name="Barry K."/>
            <person name="Glavina del Rio T."/>
            <person name="Dalin E."/>
            <person name="Tice H."/>
            <person name="Pitluck S."/>
            <person name="Bruce D."/>
            <person name="Goodwin L."/>
            <person name="Thompson L.S."/>
            <person name="Brettin T."/>
            <person name="Detter J.C."/>
            <person name="Han C."/>
            <person name="Schmutz J."/>
            <person name="Larimer F."/>
            <person name="Land M."/>
            <person name="Hauser L."/>
            <person name="Kyrpides N."/>
            <person name="Kim E."/>
            <person name="Stephens C."/>
            <person name="Richardson P."/>
        </authorList>
    </citation>
    <scope>NUCLEOTIDE SEQUENCE [LARGE SCALE GENOMIC DNA]</scope>
    <source>
        <strain>K31</strain>
    </source>
</reference>